<evidence type="ECO:0000255" key="1">
    <source>
        <dbReference type="HAMAP-Rule" id="MF_00040"/>
    </source>
</evidence>
<dbReference type="EMBL" id="CP000527">
    <property type="protein sequence ID" value="ABM29128.1"/>
    <property type="molecule type" value="Genomic_DNA"/>
</dbReference>
<dbReference type="RefSeq" id="WP_011792660.1">
    <property type="nucleotide sequence ID" value="NC_008751.1"/>
</dbReference>
<dbReference type="SMR" id="A1VFB2"/>
<dbReference type="KEGG" id="dvl:Dvul_2112"/>
<dbReference type="HOGENOM" id="CLU_073981_2_0_7"/>
<dbReference type="Proteomes" id="UP000009173">
    <property type="component" value="Chromosome"/>
</dbReference>
<dbReference type="GO" id="GO:0005829">
    <property type="term" value="C:cytosol"/>
    <property type="evidence" value="ECO:0007669"/>
    <property type="project" value="GOC"/>
</dbReference>
<dbReference type="GO" id="GO:0043023">
    <property type="term" value="F:ribosomal large subunit binding"/>
    <property type="evidence" value="ECO:0007669"/>
    <property type="project" value="TreeGrafter"/>
</dbReference>
<dbReference type="GO" id="GO:0002184">
    <property type="term" value="P:cytoplasmic translational termination"/>
    <property type="evidence" value="ECO:0007669"/>
    <property type="project" value="TreeGrafter"/>
</dbReference>
<dbReference type="CDD" id="cd00520">
    <property type="entry name" value="RRF"/>
    <property type="match status" value="1"/>
</dbReference>
<dbReference type="FunFam" id="1.10.132.20:FF:000001">
    <property type="entry name" value="Ribosome-recycling factor"/>
    <property type="match status" value="1"/>
</dbReference>
<dbReference type="FunFam" id="3.30.1360.40:FF:000001">
    <property type="entry name" value="Ribosome-recycling factor"/>
    <property type="match status" value="1"/>
</dbReference>
<dbReference type="Gene3D" id="3.30.1360.40">
    <property type="match status" value="1"/>
</dbReference>
<dbReference type="Gene3D" id="1.10.132.20">
    <property type="entry name" value="Ribosome-recycling factor"/>
    <property type="match status" value="1"/>
</dbReference>
<dbReference type="HAMAP" id="MF_00040">
    <property type="entry name" value="RRF"/>
    <property type="match status" value="1"/>
</dbReference>
<dbReference type="InterPro" id="IPR002661">
    <property type="entry name" value="Ribosome_recyc_fac"/>
</dbReference>
<dbReference type="InterPro" id="IPR023584">
    <property type="entry name" value="Ribosome_recyc_fac_dom"/>
</dbReference>
<dbReference type="InterPro" id="IPR036191">
    <property type="entry name" value="RRF_sf"/>
</dbReference>
<dbReference type="NCBIfam" id="TIGR00496">
    <property type="entry name" value="frr"/>
    <property type="match status" value="1"/>
</dbReference>
<dbReference type="PANTHER" id="PTHR20982:SF3">
    <property type="entry name" value="MITOCHONDRIAL RIBOSOME RECYCLING FACTOR PSEUDO 1"/>
    <property type="match status" value="1"/>
</dbReference>
<dbReference type="PANTHER" id="PTHR20982">
    <property type="entry name" value="RIBOSOME RECYCLING FACTOR"/>
    <property type="match status" value="1"/>
</dbReference>
<dbReference type="Pfam" id="PF01765">
    <property type="entry name" value="RRF"/>
    <property type="match status" value="1"/>
</dbReference>
<dbReference type="SUPFAM" id="SSF55194">
    <property type="entry name" value="Ribosome recycling factor, RRF"/>
    <property type="match status" value="1"/>
</dbReference>
<reference key="1">
    <citation type="journal article" date="2009" name="Environ. Microbiol.">
        <title>Contribution of mobile genetic elements to Desulfovibrio vulgaris genome plasticity.</title>
        <authorList>
            <person name="Walker C.B."/>
            <person name="Stolyar S."/>
            <person name="Chivian D."/>
            <person name="Pinel N."/>
            <person name="Gabster J.A."/>
            <person name="Dehal P.S."/>
            <person name="He Z."/>
            <person name="Yang Z.K."/>
            <person name="Yen H.C."/>
            <person name="Zhou J."/>
            <person name="Wall J.D."/>
            <person name="Hazen T.C."/>
            <person name="Arkin A.P."/>
            <person name="Stahl D.A."/>
        </authorList>
    </citation>
    <scope>NUCLEOTIDE SEQUENCE [LARGE SCALE GENOMIC DNA]</scope>
    <source>
        <strain>DP4</strain>
    </source>
</reference>
<keyword id="KW-0963">Cytoplasm</keyword>
<keyword id="KW-0648">Protein biosynthesis</keyword>
<comment type="function">
    <text evidence="1">Responsible for the release of ribosomes from messenger RNA at the termination of protein biosynthesis. May increase the efficiency of translation by recycling ribosomes from one round of translation to another.</text>
</comment>
<comment type="subcellular location">
    <subcellularLocation>
        <location evidence="1">Cytoplasm</location>
    </subcellularLocation>
</comment>
<comment type="similarity">
    <text evidence="1">Belongs to the RRF family.</text>
</comment>
<name>RRF_NITV4</name>
<organism>
    <name type="scientific">Nitratidesulfovibrio vulgaris (strain DP4)</name>
    <name type="common">Desulfovibrio vulgaris</name>
    <dbReference type="NCBI Taxonomy" id="391774"/>
    <lineage>
        <taxon>Bacteria</taxon>
        <taxon>Pseudomonadati</taxon>
        <taxon>Thermodesulfobacteriota</taxon>
        <taxon>Desulfovibrionia</taxon>
        <taxon>Desulfovibrionales</taxon>
        <taxon>Desulfovibrionaceae</taxon>
        <taxon>Nitratidesulfovibrio</taxon>
    </lineage>
</organism>
<gene>
    <name evidence="1" type="primary">frr</name>
    <name type="ordered locus">Dvul_2112</name>
</gene>
<proteinExistence type="inferred from homology"/>
<sequence>MDMESILLDAEERMEKAIAALEREFSRLRTGRASASLVDGIKVDYYGTPTPISQVASVAVPDSRCITIQPWDRNAFSLIEKAILKSDLGLNPVNDGKIIRINIPPLTEERRKDLGKMARKYAEEAKVAVRNVRRDANEQLKKLEKNKELSEDDLRKAQEDVQKLTDRFVAKTDEKAGAKEKEIMDI</sequence>
<protein>
    <recommendedName>
        <fullName evidence="1">Ribosome-recycling factor</fullName>
        <shortName evidence="1">RRF</shortName>
    </recommendedName>
    <alternativeName>
        <fullName evidence="1">Ribosome-releasing factor</fullName>
    </alternativeName>
</protein>
<feature type="chain" id="PRO_1000003155" description="Ribosome-recycling factor">
    <location>
        <begin position="1"/>
        <end position="186"/>
    </location>
</feature>
<accession>A1VFB2</accession>